<gene>
    <name evidence="1" type="primary">purM</name>
    <name type="ordered locus">Mevan_0568</name>
</gene>
<comment type="catalytic activity">
    <reaction evidence="1">
        <text>2-formamido-N(1)-(5-O-phospho-beta-D-ribosyl)acetamidine + ATP = 5-amino-1-(5-phospho-beta-D-ribosyl)imidazole + ADP + phosphate + H(+)</text>
        <dbReference type="Rhea" id="RHEA:23032"/>
        <dbReference type="ChEBI" id="CHEBI:15378"/>
        <dbReference type="ChEBI" id="CHEBI:30616"/>
        <dbReference type="ChEBI" id="CHEBI:43474"/>
        <dbReference type="ChEBI" id="CHEBI:137981"/>
        <dbReference type="ChEBI" id="CHEBI:147287"/>
        <dbReference type="ChEBI" id="CHEBI:456216"/>
        <dbReference type="EC" id="6.3.3.1"/>
    </reaction>
</comment>
<comment type="pathway">
    <text evidence="1">Purine metabolism; IMP biosynthesis via de novo pathway; 5-amino-1-(5-phospho-D-ribosyl)imidazole from N(2)-formyl-N(1)-(5-phospho-D-ribosyl)glycinamide: step 2/2.</text>
</comment>
<comment type="subcellular location">
    <subcellularLocation>
        <location evidence="1">Cytoplasm</location>
    </subcellularLocation>
</comment>
<comment type="similarity">
    <text evidence="1">Belongs to the AIR synthase family.</text>
</comment>
<protein>
    <recommendedName>
        <fullName evidence="1">Phosphoribosylformylglycinamidine cyclo-ligase</fullName>
        <ecNumber evidence="1">6.3.3.1</ecNumber>
    </recommendedName>
    <alternativeName>
        <fullName evidence="1">AIR synthase</fullName>
    </alternativeName>
    <alternativeName>
        <fullName evidence="1">AIRS</fullName>
    </alternativeName>
    <alternativeName>
        <fullName evidence="1">Phosphoribosyl-aminoimidazole synthetase</fullName>
    </alternativeName>
</protein>
<reference key="1">
    <citation type="submission" date="2007-06" db="EMBL/GenBank/DDBJ databases">
        <title>Complete sequence of Methanococcus vannielii SB.</title>
        <authorList>
            <consortium name="US DOE Joint Genome Institute"/>
            <person name="Copeland A."/>
            <person name="Lucas S."/>
            <person name="Lapidus A."/>
            <person name="Barry K."/>
            <person name="Glavina del Rio T."/>
            <person name="Dalin E."/>
            <person name="Tice H."/>
            <person name="Pitluck S."/>
            <person name="Chain P."/>
            <person name="Malfatti S."/>
            <person name="Shin M."/>
            <person name="Vergez L."/>
            <person name="Schmutz J."/>
            <person name="Larimer F."/>
            <person name="Land M."/>
            <person name="Hauser L."/>
            <person name="Kyrpides N."/>
            <person name="Anderson I."/>
            <person name="Sieprawska-Lupa M."/>
            <person name="Whitman W.B."/>
            <person name="Richardson P."/>
        </authorList>
    </citation>
    <scope>NUCLEOTIDE SEQUENCE [LARGE SCALE GENOMIC DNA]</scope>
    <source>
        <strain>ATCC 35089 / DSM 1224 / JCM 13029 / OCM 148 / SB</strain>
    </source>
</reference>
<accession>A6UPQ3</accession>
<name>PUR5_METVS</name>
<evidence type="ECO:0000255" key="1">
    <source>
        <dbReference type="HAMAP-Rule" id="MF_00741"/>
    </source>
</evidence>
<keyword id="KW-0067">ATP-binding</keyword>
<keyword id="KW-0963">Cytoplasm</keyword>
<keyword id="KW-0436">Ligase</keyword>
<keyword id="KW-0547">Nucleotide-binding</keyword>
<keyword id="KW-0658">Purine biosynthesis</keyword>
<proteinExistence type="inferred from homology"/>
<dbReference type="EC" id="6.3.3.1" evidence="1"/>
<dbReference type="EMBL" id="CP000742">
    <property type="protein sequence ID" value="ABR54475.1"/>
    <property type="molecule type" value="Genomic_DNA"/>
</dbReference>
<dbReference type="RefSeq" id="WP_011972378.1">
    <property type="nucleotide sequence ID" value="NC_009634.1"/>
</dbReference>
<dbReference type="SMR" id="A6UPQ3"/>
<dbReference type="STRING" id="406327.Mevan_0568"/>
<dbReference type="GeneID" id="5326015"/>
<dbReference type="KEGG" id="mvn:Mevan_0568"/>
<dbReference type="eggNOG" id="arCOG00639">
    <property type="taxonomic scope" value="Archaea"/>
</dbReference>
<dbReference type="HOGENOM" id="CLU_047116_0_0_2"/>
<dbReference type="OrthoDB" id="6605at2157"/>
<dbReference type="UniPathway" id="UPA00074">
    <property type="reaction ID" value="UER00129"/>
</dbReference>
<dbReference type="Proteomes" id="UP000001107">
    <property type="component" value="Chromosome"/>
</dbReference>
<dbReference type="GO" id="GO:0005829">
    <property type="term" value="C:cytosol"/>
    <property type="evidence" value="ECO:0007669"/>
    <property type="project" value="TreeGrafter"/>
</dbReference>
<dbReference type="GO" id="GO:0005524">
    <property type="term" value="F:ATP binding"/>
    <property type="evidence" value="ECO:0007669"/>
    <property type="project" value="UniProtKB-KW"/>
</dbReference>
<dbReference type="GO" id="GO:0004637">
    <property type="term" value="F:phosphoribosylamine-glycine ligase activity"/>
    <property type="evidence" value="ECO:0007669"/>
    <property type="project" value="TreeGrafter"/>
</dbReference>
<dbReference type="GO" id="GO:0004641">
    <property type="term" value="F:phosphoribosylformylglycinamidine cyclo-ligase activity"/>
    <property type="evidence" value="ECO:0007669"/>
    <property type="project" value="UniProtKB-UniRule"/>
</dbReference>
<dbReference type="GO" id="GO:0006189">
    <property type="term" value="P:'de novo' IMP biosynthetic process"/>
    <property type="evidence" value="ECO:0007669"/>
    <property type="project" value="UniProtKB-UniRule"/>
</dbReference>
<dbReference type="GO" id="GO:0046084">
    <property type="term" value="P:adenine biosynthetic process"/>
    <property type="evidence" value="ECO:0007669"/>
    <property type="project" value="TreeGrafter"/>
</dbReference>
<dbReference type="CDD" id="cd02196">
    <property type="entry name" value="PurM"/>
    <property type="match status" value="1"/>
</dbReference>
<dbReference type="FunFam" id="3.30.1330.10:FF:000020">
    <property type="entry name" value="Phosphoribosylformylglycinamidine cyclo-ligase"/>
    <property type="match status" value="1"/>
</dbReference>
<dbReference type="FunFam" id="3.90.650.10:FF:000011">
    <property type="entry name" value="Phosphoribosylformylglycinamidine cyclo-ligase"/>
    <property type="match status" value="1"/>
</dbReference>
<dbReference type="Gene3D" id="3.90.650.10">
    <property type="entry name" value="PurM-like C-terminal domain"/>
    <property type="match status" value="1"/>
</dbReference>
<dbReference type="Gene3D" id="3.30.1330.10">
    <property type="entry name" value="PurM-like, N-terminal domain"/>
    <property type="match status" value="1"/>
</dbReference>
<dbReference type="HAMAP" id="MF_00741">
    <property type="entry name" value="AIRS"/>
    <property type="match status" value="1"/>
</dbReference>
<dbReference type="InterPro" id="IPR010918">
    <property type="entry name" value="PurM-like_C_dom"/>
</dbReference>
<dbReference type="InterPro" id="IPR036676">
    <property type="entry name" value="PurM-like_C_sf"/>
</dbReference>
<dbReference type="InterPro" id="IPR016188">
    <property type="entry name" value="PurM-like_N"/>
</dbReference>
<dbReference type="InterPro" id="IPR036921">
    <property type="entry name" value="PurM-like_N_sf"/>
</dbReference>
<dbReference type="InterPro" id="IPR004733">
    <property type="entry name" value="PurM_cligase"/>
</dbReference>
<dbReference type="NCBIfam" id="TIGR00878">
    <property type="entry name" value="purM"/>
    <property type="match status" value="1"/>
</dbReference>
<dbReference type="PANTHER" id="PTHR10520:SF12">
    <property type="entry name" value="TRIFUNCTIONAL PURINE BIOSYNTHETIC PROTEIN ADENOSINE-3"/>
    <property type="match status" value="1"/>
</dbReference>
<dbReference type="PANTHER" id="PTHR10520">
    <property type="entry name" value="TRIFUNCTIONAL PURINE BIOSYNTHETIC PROTEIN ADENOSINE-3-RELATED"/>
    <property type="match status" value="1"/>
</dbReference>
<dbReference type="Pfam" id="PF00586">
    <property type="entry name" value="AIRS"/>
    <property type="match status" value="1"/>
</dbReference>
<dbReference type="Pfam" id="PF02769">
    <property type="entry name" value="AIRS_C"/>
    <property type="match status" value="1"/>
</dbReference>
<dbReference type="SUPFAM" id="SSF56042">
    <property type="entry name" value="PurM C-terminal domain-like"/>
    <property type="match status" value="1"/>
</dbReference>
<dbReference type="SUPFAM" id="SSF55326">
    <property type="entry name" value="PurM N-terminal domain-like"/>
    <property type="match status" value="1"/>
</dbReference>
<organism>
    <name type="scientific">Methanococcus vannielii (strain ATCC 35089 / DSM 1224 / JCM 13029 / OCM 148 / SB)</name>
    <dbReference type="NCBI Taxonomy" id="406327"/>
    <lineage>
        <taxon>Archaea</taxon>
        <taxon>Methanobacteriati</taxon>
        <taxon>Methanobacteriota</taxon>
        <taxon>Methanomada group</taxon>
        <taxon>Methanococci</taxon>
        <taxon>Methanococcales</taxon>
        <taxon>Methanococcaceae</taxon>
        <taxon>Methanococcus</taxon>
    </lineage>
</organism>
<feature type="chain" id="PRO_1000046449" description="Phosphoribosylformylglycinamidine cyclo-ligase">
    <location>
        <begin position="1"/>
        <end position="349"/>
    </location>
</feature>
<sequence length="349" mass="38351">MVTYKDAGVDIYEEDRIIRALISKINFEREDAIKPADLKGHYAGAIEFGDYYLVLCTDGVGSKMVVAEMANNFETVPIDMIAMNVNDAICIGAEPVALVDYMAVEEITENIAEQIGKGLNEGIKESNINLIGGETASLPNMIKGIDLAGTVLAVVKKSEIISGQTVKKGDVIVGLRSSGIHSNGLSLARKVFFEISNLNVNSKLSYGKTVADELLTPTRIYVKPVLDMIKKADVKGLAHITGGGFRKLKRLNKEVCYKIDNLPEIPPIFKEIQTLGNVADEEMFKTFNMGIGFCVIVSKENAEKIIEISNQYKIPAFVIGEIEDNIEIDGEFKKETVLVEYNGKKMIME</sequence>